<name>SYR_YERPP</name>
<proteinExistence type="inferred from homology"/>
<comment type="catalytic activity">
    <reaction evidence="1">
        <text>tRNA(Arg) + L-arginine + ATP = L-arginyl-tRNA(Arg) + AMP + diphosphate</text>
        <dbReference type="Rhea" id="RHEA:20301"/>
        <dbReference type="Rhea" id="RHEA-COMP:9658"/>
        <dbReference type="Rhea" id="RHEA-COMP:9673"/>
        <dbReference type="ChEBI" id="CHEBI:30616"/>
        <dbReference type="ChEBI" id="CHEBI:32682"/>
        <dbReference type="ChEBI" id="CHEBI:33019"/>
        <dbReference type="ChEBI" id="CHEBI:78442"/>
        <dbReference type="ChEBI" id="CHEBI:78513"/>
        <dbReference type="ChEBI" id="CHEBI:456215"/>
        <dbReference type="EC" id="6.1.1.19"/>
    </reaction>
</comment>
<comment type="subunit">
    <text evidence="1">Monomer.</text>
</comment>
<comment type="subcellular location">
    <subcellularLocation>
        <location evidence="1">Cytoplasm</location>
    </subcellularLocation>
</comment>
<comment type="similarity">
    <text evidence="1">Belongs to the class-I aminoacyl-tRNA synthetase family.</text>
</comment>
<keyword id="KW-0030">Aminoacyl-tRNA synthetase</keyword>
<keyword id="KW-0067">ATP-binding</keyword>
<keyword id="KW-0963">Cytoplasm</keyword>
<keyword id="KW-0436">Ligase</keyword>
<keyword id="KW-0547">Nucleotide-binding</keyword>
<keyword id="KW-0648">Protein biosynthesis</keyword>
<gene>
    <name evidence="1" type="primary">argS</name>
    <name type="ordered locus">YPDSF_1077</name>
</gene>
<dbReference type="EC" id="6.1.1.19" evidence="1"/>
<dbReference type="EMBL" id="CP000668">
    <property type="protein sequence ID" value="ABP39475.1"/>
    <property type="molecule type" value="Genomic_DNA"/>
</dbReference>
<dbReference type="RefSeq" id="WP_002211212.1">
    <property type="nucleotide sequence ID" value="NZ_CP009715.1"/>
</dbReference>
<dbReference type="SMR" id="A4TJL3"/>
<dbReference type="GeneID" id="57976615"/>
<dbReference type="KEGG" id="ypp:YPDSF_1077"/>
<dbReference type="PATRIC" id="fig|386656.14.peg.2756"/>
<dbReference type="GO" id="GO:0005737">
    <property type="term" value="C:cytoplasm"/>
    <property type="evidence" value="ECO:0007669"/>
    <property type="project" value="UniProtKB-SubCell"/>
</dbReference>
<dbReference type="GO" id="GO:0004814">
    <property type="term" value="F:arginine-tRNA ligase activity"/>
    <property type="evidence" value="ECO:0007669"/>
    <property type="project" value="UniProtKB-UniRule"/>
</dbReference>
<dbReference type="GO" id="GO:0005524">
    <property type="term" value="F:ATP binding"/>
    <property type="evidence" value="ECO:0007669"/>
    <property type="project" value="UniProtKB-UniRule"/>
</dbReference>
<dbReference type="GO" id="GO:0006420">
    <property type="term" value="P:arginyl-tRNA aminoacylation"/>
    <property type="evidence" value="ECO:0007669"/>
    <property type="project" value="UniProtKB-UniRule"/>
</dbReference>
<dbReference type="CDD" id="cd07956">
    <property type="entry name" value="Anticodon_Ia_Arg"/>
    <property type="match status" value="1"/>
</dbReference>
<dbReference type="CDD" id="cd00671">
    <property type="entry name" value="ArgRS_core"/>
    <property type="match status" value="1"/>
</dbReference>
<dbReference type="FunFam" id="1.10.730.10:FF:000001">
    <property type="entry name" value="Arginine--tRNA ligase"/>
    <property type="match status" value="1"/>
</dbReference>
<dbReference type="FunFam" id="3.30.1360.70:FF:000001">
    <property type="entry name" value="Arginine--tRNA ligase"/>
    <property type="match status" value="1"/>
</dbReference>
<dbReference type="FunFam" id="3.40.50.620:FF:000030">
    <property type="entry name" value="Arginine--tRNA ligase"/>
    <property type="match status" value="1"/>
</dbReference>
<dbReference type="Gene3D" id="3.30.1360.70">
    <property type="entry name" value="Arginyl tRNA synthetase N-terminal domain"/>
    <property type="match status" value="1"/>
</dbReference>
<dbReference type="Gene3D" id="3.40.50.620">
    <property type="entry name" value="HUPs"/>
    <property type="match status" value="1"/>
</dbReference>
<dbReference type="Gene3D" id="1.10.730.10">
    <property type="entry name" value="Isoleucyl-tRNA Synthetase, Domain 1"/>
    <property type="match status" value="1"/>
</dbReference>
<dbReference type="HAMAP" id="MF_00123">
    <property type="entry name" value="Arg_tRNA_synth"/>
    <property type="match status" value="1"/>
</dbReference>
<dbReference type="InterPro" id="IPR001412">
    <property type="entry name" value="aa-tRNA-synth_I_CS"/>
</dbReference>
<dbReference type="InterPro" id="IPR001278">
    <property type="entry name" value="Arg-tRNA-ligase"/>
</dbReference>
<dbReference type="InterPro" id="IPR005148">
    <property type="entry name" value="Arg-tRNA-synth_N"/>
</dbReference>
<dbReference type="InterPro" id="IPR036695">
    <property type="entry name" value="Arg-tRNA-synth_N_sf"/>
</dbReference>
<dbReference type="InterPro" id="IPR035684">
    <property type="entry name" value="ArgRS_core"/>
</dbReference>
<dbReference type="InterPro" id="IPR008909">
    <property type="entry name" value="DALR_anticod-bd"/>
</dbReference>
<dbReference type="InterPro" id="IPR014729">
    <property type="entry name" value="Rossmann-like_a/b/a_fold"/>
</dbReference>
<dbReference type="InterPro" id="IPR009080">
    <property type="entry name" value="tRNAsynth_Ia_anticodon-bd"/>
</dbReference>
<dbReference type="NCBIfam" id="TIGR00456">
    <property type="entry name" value="argS"/>
    <property type="match status" value="1"/>
</dbReference>
<dbReference type="PANTHER" id="PTHR11956:SF5">
    <property type="entry name" value="ARGININE--TRNA LIGASE, CYTOPLASMIC"/>
    <property type="match status" value="1"/>
</dbReference>
<dbReference type="PANTHER" id="PTHR11956">
    <property type="entry name" value="ARGINYL-TRNA SYNTHETASE"/>
    <property type="match status" value="1"/>
</dbReference>
<dbReference type="Pfam" id="PF03485">
    <property type="entry name" value="Arg_tRNA_synt_N"/>
    <property type="match status" value="1"/>
</dbReference>
<dbReference type="Pfam" id="PF05746">
    <property type="entry name" value="DALR_1"/>
    <property type="match status" value="1"/>
</dbReference>
<dbReference type="Pfam" id="PF00750">
    <property type="entry name" value="tRNA-synt_1d"/>
    <property type="match status" value="1"/>
</dbReference>
<dbReference type="PRINTS" id="PR01038">
    <property type="entry name" value="TRNASYNTHARG"/>
</dbReference>
<dbReference type="SMART" id="SM01016">
    <property type="entry name" value="Arg_tRNA_synt_N"/>
    <property type="match status" value="1"/>
</dbReference>
<dbReference type="SMART" id="SM00836">
    <property type="entry name" value="DALR_1"/>
    <property type="match status" value="1"/>
</dbReference>
<dbReference type="SUPFAM" id="SSF47323">
    <property type="entry name" value="Anticodon-binding domain of a subclass of class I aminoacyl-tRNA synthetases"/>
    <property type="match status" value="1"/>
</dbReference>
<dbReference type="SUPFAM" id="SSF55190">
    <property type="entry name" value="Arginyl-tRNA synthetase (ArgRS), N-terminal 'additional' domain"/>
    <property type="match status" value="1"/>
</dbReference>
<dbReference type="SUPFAM" id="SSF52374">
    <property type="entry name" value="Nucleotidylyl transferase"/>
    <property type="match status" value="1"/>
</dbReference>
<dbReference type="PROSITE" id="PS00178">
    <property type="entry name" value="AA_TRNA_LIGASE_I"/>
    <property type="match status" value="1"/>
</dbReference>
<reference key="1">
    <citation type="submission" date="2007-02" db="EMBL/GenBank/DDBJ databases">
        <title>Complete sequence of chromosome of Yersinia pestis Pestoides F.</title>
        <authorList>
            <consortium name="US DOE Joint Genome Institute"/>
            <person name="Copeland A."/>
            <person name="Lucas S."/>
            <person name="Lapidus A."/>
            <person name="Barry K."/>
            <person name="Detter J.C."/>
            <person name="Glavina del Rio T."/>
            <person name="Hammon N."/>
            <person name="Israni S."/>
            <person name="Dalin E."/>
            <person name="Tice H."/>
            <person name="Pitluck S."/>
            <person name="Di Bartolo G."/>
            <person name="Chain P."/>
            <person name="Malfatti S."/>
            <person name="Shin M."/>
            <person name="Vergez L."/>
            <person name="Schmutz J."/>
            <person name="Larimer F."/>
            <person name="Land M."/>
            <person name="Hauser L."/>
            <person name="Worsham P."/>
            <person name="Chu M."/>
            <person name="Bearden S."/>
            <person name="Garcia E."/>
            <person name="Richardson P."/>
        </authorList>
    </citation>
    <scope>NUCLEOTIDE SEQUENCE [LARGE SCALE GENOMIC DNA]</scope>
    <source>
        <strain>Pestoides F</strain>
    </source>
</reference>
<sequence length="576" mass="64142">MNIQALLSDKVSQALIAAGAPADCEAQVRQSAKAQFGDYQANGVMAVAKKLGMQPRQLAERVVELLDLTGIASKIEIAGPGFINIFLDRQWVAEKVEYALTAPKLGVAPVEPQTIVVDYSAPNVAKQMHVGHLRSTIIGDAAVRTLAFLGHNVIRANHVGDWGTQFGMLIAYLEKMQNENASDMGLSDLELFYQQAKKTYDEDEEFALRARAYVVKLQSGDEYCRQMWRKLVDITMAQNQVAYDRLNVTLTKDDVMGESLYNAMLPEIVADLKAKGLAVESEGATVVYLDEYKNKDGEPMGVIIQKKDGGYLYTTTDIACAKYRYETLGADRILYYIDSRQHQHLMQAWTIVRKAGYVPESVPLEHHMFGMMLGKDGKPFKTRSGGTVKLSDLLDEAVERAGKLIAEKNPDMPADELKQVINAVGIGAVKYADLSKSRTTDYIFDWDNMLALDGNTAPYMQYAYTRVVSVFRRAGVDETSLTLPLVVTEDREATLATRLLQFEEIITTVAREGTPHVMCSYLYDLAGLFSSFYEHCQILNAESEEIRQSRLKLAMLTAKTLKQGLDTLGIQTVERM</sequence>
<protein>
    <recommendedName>
        <fullName evidence="1">Arginine--tRNA ligase</fullName>
        <ecNumber evidence="1">6.1.1.19</ecNumber>
    </recommendedName>
    <alternativeName>
        <fullName evidence="1">Arginyl-tRNA synthetase</fullName>
        <shortName evidence="1">ArgRS</shortName>
    </alternativeName>
</protein>
<accession>A4TJL3</accession>
<evidence type="ECO:0000255" key="1">
    <source>
        <dbReference type="HAMAP-Rule" id="MF_00123"/>
    </source>
</evidence>
<organism>
    <name type="scientific">Yersinia pestis (strain Pestoides F)</name>
    <dbReference type="NCBI Taxonomy" id="386656"/>
    <lineage>
        <taxon>Bacteria</taxon>
        <taxon>Pseudomonadati</taxon>
        <taxon>Pseudomonadota</taxon>
        <taxon>Gammaproteobacteria</taxon>
        <taxon>Enterobacterales</taxon>
        <taxon>Yersiniaceae</taxon>
        <taxon>Yersinia</taxon>
    </lineage>
</organism>
<feature type="chain" id="PRO_1000018148" description="Arginine--tRNA ligase">
    <location>
        <begin position="1"/>
        <end position="576"/>
    </location>
</feature>
<feature type="short sequence motif" description="'HIGH' region">
    <location>
        <begin position="122"/>
        <end position="132"/>
    </location>
</feature>